<evidence type="ECO:0000255" key="1"/>
<evidence type="ECO:0000255" key="2">
    <source>
        <dbReference type="PROSITE-ProRule" id="PRU00274"/>
    </source>
</evidence>
<evidence type="ECO:0000269" key="3">
    <source>
    </source>
</evidence>
<evidence type="ECO:0000303" key="4">
    <source>
    </source>
</evidence>
<evidence type="ECO:0000303" key="5">
    <source>
    </source>
</evidence>
<evidence type="ECO:0000305" key="6"/>
<evidence type="ECO:0007829" key="7">
    <source>
        <dbReference type="PDB" id="4NFE"/>
    </source>
</evidence>
<evidence type="ECO:0007829" key="8">
    <source>
        <dbReference type="PDB" id="4NFF"/>
    </source>
</evidence>
<protein>
    <recommendedName>
        <fullName>Kallikrein-2</fullName>
        <ecNumber>3.4.21.35</ecNumber>
    </recommendedName>
    <alternativeName>
        <fullName>Glandular kallikrein-1</fullName>
        <shortName>hGK-1</shortName>
    </alternativeName>
    <alternativeName>
        <fullName>Tissue kallikrein-2</fullName>
    </alternativeName>
</protein>
<organism>
    <name type="scientific">Homo sapiens</name>
    <name type="common">Human</name>
    <dbReference type="NCBI Taxonomy" id="9606"/>
    <lineage>
        <taxon>Eukaryota</taxon>
        <taxon>Metazoa</taxon>
        <taxon>Chordata</taxon>
        <taxon>Craniata</taxon>
        <taxon>Vertebrata</taxon>
        <taxon>Euteleostomi</taxon>
        <taxon>Mammalia</taxon>
        <taxon>Eutheria</taxon>
        <taxon>Euarchontoglires</taxon>
        <taxon>Primates</taxon>
        <taxon>Haplorrhini</taxon>
        <taxon>Catarrhini</taxon>
        <taxon>Hominidae</taxon>
        <taxon>Homo</taxon>
    </lineage>
</organism>
<proteinExistence type="evidence at protein level"/>
<sequence length="261" mass="28671">MWDLVLSIALSVGCTGAVPLIQSRIVGGWECEKHSQPWQVAVYSHGWAHCGGVLVHPQWVLTAAHCLKKNSQVWLGRHNLFEPEDTGQRVPVSHSFPHPLYNMSLLKHQSLRPDEDSSHDLMLLRLSEPAKITDVVKVLGLPTQEPALGTTCYASGWGSIEPEEFLRPRSLQCVSLHLLSNDMCARAYSEKVTEFMLCAGLWTGGKDTCGGDSGGPLVCNGVLQGITSWGPEPCALPEKPAVYTKVVHYRKWIKDTIAANP</sequence>
<reference key="1">
    <citation type="journal article" date="1987" name="DNA">
        <title>Primary structure of a human glandular kallikrein gene.</title>
        <authorList>
            <person name="Schedlich L.J."/>
            <person name="Bennetts B.H."/>
            <person name="Morris B.J."/>
        </authorList>
    </citation>
    <scope>NUCLEOTIDE SEQUENCE [GENOMIC DNA] (ISOFORM 1)</scope>
</reference>
<reference key="2">
    <citation type="journal article" date="1991" name="Mol. Cell. Endocrinol.">
        <title>Identification and androgen-regulated expression of two major human glandular kallikrein-1 (hGK-1) mRNA species.</title>
        <authorList>
            <person name="Riegman P.H."/>
            <person name="Vlietstra R.J."/>
            <person name="der Korput H.A."/>
            <person name="Romijn J.C."/>
            <person name="Trapman J."/>
        </authorList>
    </citation>
    <scope>NUCLEOTIDE SEQUENCE [MRNA] (ISOFORMS 1 AND 2)</scope>
    <source>
        <tissue>Prostate</tissue>
    </source>
</reference>
<reference key="3">
    <citation type="journal article" date="1999" name="Biochem. Biophys. Res. Commun.">
        <title>Identification of three new alternate human kallikrein 2 transcripts: evidence of long transcript and alternative splicing.</title>
        <authorList>
            <person name="Liu X.F."/>
            <person name="Essand M."/>
            <person name="Vasmatzis G."/>
            <person name="Lee B."/>
            <person name="Pastan I."/>
        </authorList>
    </citation>
    <scope>NUCLEOTIDE SEQUENCE [MRNA]</scope>
    <scope>ALTERNATIVE SPLICING</scope>
</reference>
<reference key="4">
    <citation type="journal article" date="2000" name="Gene">
        <title>Sequencing and expression analysis of the serine protease gene cluster located in chromosome 19q13 region.</title>
        <authorList>
            <person name="Gan L."/>
            <person name="Lee I."/>
            <person name="Smith R."/>
            <person name="Argonza-Barrett R."/>
            <person name="Lei H."/>
            <person name="McCuaig J."/>
            <person name="Moss P."/>
            <person name="Paeper B."/>
            <person name="Wang K."/>
        </authorList>
    </citation>
    <scope>NUCLEOTIDE SEQUENCE [GENOMIC DNA]</scope>
</reference>
<reference key="5">
    <citation type="submission" date="2003-05" db="EMBL/GenBank/DDBJ databases">
        <title>Cloning of human full-length CDSs in BD Creator(TM) system donor vector.</title>
        <authorList>
            <person name="Kalnine N."/>
            <person name="Chen X."/>
            <person name="Rolfs A."/>
            <person name="Halleck A."/>
            <person name="Hines L."/>
            <person name="Eisenstein S."/>
            <person name="Koundinya M."/>
            <person name="Raphael J."/>
            <person name="Moreira D."/>
            <person name="Kelley T."/>
            <person name="LaBaer J."/>
            <person name="Lin Y."/>
            <person name="Phelan M."/>
            <person name="Farmer A."/>
        </authorList>
    </citation>
    <scope>NUCLEOTIDE SEQUENCE [LARGE SCALE MRNA] (ISOFORM 1)</scope>
</reference>
<reference key="6">
    <citation type="journal article" date="2004" name="Nat. Genet.">
        <title>Complete sequencing and characterization of 21,243 full-length human cDNAs.</title>
        <authorList>
            <person name="Ota T."/>
            <person name="Suzuki Y."/>
            <person name="Nishikawa T."/>
            <person name="Otsuki T."/>
            <person name="Sugiyama T."/>
            <person name="Irie R."/>
            <person name="Wakamatsu A."/>
            <person name="Hayashi K."/>
            <person name="Sato H."/>
            <person name="Nagai K."/>
            <person name="Kimura K."/>
            <person name="Makita H."/>
            <person name="Sekine M."/>
            <person name="Obayashi M."/>
            <person name="Nishi T."/>
            <person name="Shibahara T."/>
            <person name="Tanaka T."/>
            <person name="Ishii S."/>
            <person name="Yamamoto J."/>
            <person name="Saito K."/>
            <person name="Kawai Y."/>
            <person name="Isono Y."/>
            <person name="Nakamura Y."/>
            <person name="Nagahari K."/>
            <person name="Murakami K."/>
            <person name="Yasuda T."/>
            <person name="Iwayanagi T."/>
            <person name="Wagatsuma M."/>
            <person name="Shiratori A."/>
            <person name="Sudo H."/>
            <person name="Hosoiri T."/>
            <person name="Kaku Y."/>
            <person name="Kodaira H."/>
            <person name="Kondo H."/>
            <person name="Sugawara M."/>
            <person name="Takahashi M."/>
            <person name="Kanda K."/>
            <person name="Yokoi T."/>
            <person name="Furuya T."/>
            <person name="Kikkawa E."/>
            <person name="Omura Y."/>
            <person name="Abe K."/>
            <person name="Kamihara K."/>
            <person name="Katsuta N."/>
            <person name="Sato K."/>
            <person name="Tanikawa M."/>
            <person name="Yamazaki M."/>
            <person name="Ninomiya K."/>
            <person name="Ishibashi T."/>
            <person name="Yamashita H."/>
            <person name="Murakawa K."/>
            <person name="Fujimori K."/>
            <person name="Tanai H."/>
            <person name="Kimata M."/>
            <person name="Watanabe M."/>
            <person name="Hiraoka S."/>
            <person name="Chiba Y."/>
            <person name="Ishida S."/>
            <person name="Ono Y."/>
            <person name="Takiguchi S."/>
            <person name="Watanabe S."/>
            <person name="Yosida M."/>
            <person name="Hotuta T."/>
            <person name="Kusano J."/>
            <person name="Kanehori K."/>
            <person name="Takahashi-Fujii A."/>
            <person name="Hara H."/>
            <person name="Tanase T.-O."/>
            <person name="Nomura Y."/>
            <person name="Togiya S."/>
            <person name="Komai F."/>
            <person name="Hara R."/>
            <person name="Takeuchi K."/>
            <person name="Arita M."/>
            <person name="Imose N."/>
            <person name="Musashino K."/>
            <person name="Yuuki H."/>
            <person name="Oshima A."/>
            <person name="Sasaki N."/>
            <person name="Aotsuka S."/>
            <person name="Yoshikawa Y."/>
            <person name="Matsunawa H."/>
            <person name="Ichihara T."/>
            <person name="Shiohata N."/>
            <person name="Sano S."/>
            <person name="Moriya S."/>
            <person name="Momiyama H."/>
            <person name="Satoh N."/>
            <person name="Takami S."/>
            <person name="Terashima Y."/>
            <person name="Suzuki O."/>
            <person name="Nakagawa S."/>
            <person name="Senoh A."/>
            <person name="Mizoguchi H."/>
            <person name="Goto Y."/>
            <person name="Shimizu F."/>
            <person name="Wakebe H."/>
            <person name="Hishigaki H."/>
            <person name="Watanabe T."/>
            <person name="Sugiyama A."/>
            <person name="Takemoto M."/>
            <person name="Kawakami B."/>
            <person name="Yamazaki M."/>
            <person name="Watanabe K."/>
            <person name="Kumagai A."/>
            <person name="Itakura S."/>
            <person name="Fukuzumi Y."/>
            <person name="Fujimori Y."/>
            <person name="Komiyama M."/>
            <person name="Tashiro H."/>
            <person name="Tanigami A."/>
            <person name="Fujiwara T."/>
            <person name="Ono T."/>
            <person name="Yamada K."/>
            <person name="Fujii Y."/>
            <person name="Ozaki K."/>
            <person name="Hirao M."/>
            <person name="Ohmori Y."/>
            <person name="Kawabata A."/>
            <person name="Hikiji T."/>
            <person name="Kobatake N."/>
            <person name="Inagaki H."/>
            <person name="Ikema Y."/>
            <person name="Okamoto S."/>
            <person name="Okitani R."/>
            <person name="Kawakami T."/>
            <person name="Noguchi S."/>
            <person name="Itoh T."/>
            <person name="Shigeta K."/>
            <person name="Senba T."/>
            <person name="Matsumura K."/>
            <person name="Nakajima Y."/>
            <person name="Mizuno T."/>
            <person name="Morinaga M."/>
            <person name="Sasaki M."/>
            <person name="Togashi T."/>
            <person name="Oyama M."/>
            <person name="Hata H."/>
            <person name="Watanabe M."/>
            <person name="Komatsu T."/>
            <person name="Mizushima-Sugano J."/>
            <person name="Satoh T."/>
            <person name="Shirai Y."/>
            <person name="Takahashi Y."/>
            <person name="Nakagawa K."/>
            <person name="Okumura K."/>
            <person name="Nagase T."/>
            <person name="Nomura N."/>
            <person name="Kikuchi H."/>
            <person name="Masuho Y."/>
            <person name="Yamashita R."/>
            <person name="Nakai K."/>
            <person name="Yada T."/>
            <person name="Nakamura Y."/>
            <person name="Ohara O."/>
            <person name="Isogai T."/>
            <person name="Sugano S."/>
        </authorList>
    </citation>
    <scope>NUCLEOTIDE SEQUENCE [LARGE SCALE MRNA] (ISOFORMS 2 AND 4)</scope>
    <source>
        <tissue>Prostate</tissue>
    </source>
</reference>
<reference key="7">
    <citation type="journal article" date="2004" name="Nature">
        <title>The DNA sequence and biology of human chromosome 19.</title>
        <authorList>
            <person name="Grimwood J."/>
            <person name="Gordon L.A."/>
            <person name="Olsen A.S."/>
            <person name="Terry A."/>
            <person name="Schmutz J."/>
            <person name="Lamerdin J.E."/>
            <person name="Hellsten U."/>
            <person name="Goodstein D."/>
            <person name="Couronne O."/>
            <person name="Tran-Gyamfi M."/>
            <person name="Aerts A."/>
            <person name="Altherr M."/>
            <person name="Ashworth L."/>
            <person name="Bajorek E."/>
            <person name="Black S."/>
            <person name="Branscomb E."/>
            <person name="Caenepeel S."/>
            <person name="Carrano A.V."/>
            <person name="Caoile C."/>
            <person name="Chan Y.M."/>
            <person name="Christensen M."/>
            <person name="Cleland C.A."/>
            <person name="Copeland A."/>
            <person name="Dalin E."/>
            <person name="Dehal P."/>
            <person name="Denys M."/>
            <person name="Detter J.C."/>
            <person name="Escobar J."/>
            <person name="Flowers D."/>
            <person name="Fotopulos D."/>
            <person name="Garcia C."/>
            <person name="Georgescu A.M."/>
            <person name="Glavina T."/>
            <person name="Gomez M."/>
            <person name="Gonzales E."/>
            <person name="Groza M."/>
            <person name="Hammon N."/>
            <person name="Hawkins T."/>
            <person name="Haydu L."/>
            <person name="Ho I."/>
            <person name="Huang W."/>
            <person name="Israni S."/>
            <person name="Jett J."/>
            <person name="Kadner K."/>
            <person name="Kimball H."/>
            <person name="Kobayashi A."/>
            <person name="Larionov V."/>
            <person name="Leem S.-H."/>
            <person name="Lopez F."/>
            <person name="Lou Y."/>
            <person name="Lowry S."/>
            <person name="Malfatti S."/>
            <person name="Martinez D."/>
            <person name="McCready P.M."/>
            <person name="Medina C."/>
            <person name="Morgan J."/>
            <person name="Nelson K."/>
            <person name="Nolan M."/>
            <person name="Ovcharenko I."/>
            <person name="Pitluck S."/>
            <person name="Pollard M."/>
            <person name="Popkie A.P."/>
            <person name="Predki P."/>
            <person name="Quan G."/>
            <person name="Ramirez L."/>
            <person name="Rash S."/>
            <person name="Retterer J."/>
            <person name="Rodriguez A."/>
            <person name="Rogers S."/>
            <person name="Salamov A."/>
            <person name="Salazar A."/>
            <person name="She X."/>
            <person name="Smith D."/>
            <person name="Slezak T."/>
            <person name="Solovyev V."/>
            <person name="Thayer N."/>
            <person name="Tice H."/>
            <person name="Tsai M."/>
            <person name="Ustaszewska A."/>
            <person name="Vo N."/>
            <person name="Wagner M."/>
            <person name="Wheeler J."/>
            <person name="Wu K."/>
            <person name="Xie G."/>
            <person name="Yang J."/>
            <person name="Dubchak I."/>
            <person name="Furey T.S."/>
            <person name="DeJong P."/>
            <person name="Dickson M."/>
            <person name="Gordon D."/>
            <person name="Eichler E.E."/>
            <person name="Pennacchio L.A."/>
            <person name="Richardson P."/>
            <person name="Stubbs L."/>
            <person name="Rokhsar D.S."/>
            <person name="Myers R.M."/>
            <person name="Rubin E.M."/>
            <person name="Lucas S.M."/>
        </authorList>
    </citation>
    <scope>NUCLEOTIDE SEQUENCE [LARGE SCALE GENOMIC DNA]</scope>
</reference>
<reference key="8">
    <citation type="journal article" date="2004" name="Genome Res.">
        <title>The status, quality, and expansion of the NIH full-length cDNA project: the Mammalian Gene Collection (MGC).</title>
        <authorList>
            <consortium name="The MGC Project Team"/>
        </authorList>
    </citation>
    <scope>NUCLEOTIDE SEQUENCE [LARGE SCALE MRNA] (ISOFORM 1)</scope>
    <source>
        <tissue>Prostate</tissue>
    </source>
</reference>
<reference key="9">
    <citation type="journal article" date="2004" name="Genome Biol.">
        <title>An unappreciated role for RNA surveillance.</title>
        <authorList>
            <person name="Hillman R.T."/>
            <person name="Green R.E."/>
            <person name="Brenner S.E."/>
        </authorList>
    </citation>
    <scope>SPLICE ISOFORM(S) THAT ARE POTENTIAL NMD TARGET(S)</scope>
</reference>
<reference key="10">
    <citation type="journal article" date="1999" name="Nat. Genet.">
        <title>Characterization of single-nucleotide polymorphisms in coding regions of human genes.</title>
        <authorList>
            <person name="Cargill M."/>
            <person name="Altshuler D."/>
            <person name="Ireland J."/>
            <person name="Sklar P."/>
            <person name="Ardlie K."/>
            <person name="Patil N."/>
            <person name="Shaw N."/>
            <person name="Lane C.R."/>
            <person name="Lim E.P."/>
            <person name="Kalyanaraman N."/>
            <person name="Nemesh J."/>
            <person name="Ziaugra L."/>
            <person name="Friedland L."/>
            <person name="Rolfe A."/>
            <person name="Warrington J."/>
            <person name="Lipshutz R."/>
            <person name="Daley G.Q."/>
            <person name="Lander E.S."/>
        </authorList>
    </citation>
    <scope>VARIANT LEU-18</scope>
</reference>
<reference key="11">
    <citation type="journal article" date="1999" name="Nat. Genet.">
        <authorList>
            <person name="Cargill M."/>
            <person name="Altshuler D."/>
            <person name="Ireland J."/>
            <person name="Sklar P."/>
            <person name="Ardlie K."/>
            <person name="Patil N."/>
            <person name="Shaw N."/>
            <person name="Lane C.R."/>
            <person name="Lim E.P."/>
            <person name="Kalyanaraman N."/>
            <person name="Nemesh J."/>
            <person name="Ziaugra L."/>
            <person name="Friedland L."/>
            <person name="Rolfe A."/>
            <person name="Warrington J."/>
            <person name="Lipshutz R."/>
            <person name="Daley G.Q."/>
            <person name="Lander E.S."/>
        </authorList>
    </citation>
    <scope>ERRATUM OF PUBMED:10391209</scope>
</reference>
<comment type="function">
    <text>Glandular kallikreins cleave Met-Lys and Arg-Ser bonds in kininogen to release Lys-bradykinin.</text>
</comment>
<comment type="catalytic activity">
    <reaction>
        <text>Preferential cleavage of Arg-|-Xaa bonds in small molecule substrates. Highly selective action to release kallidin (lysyl-bradykinin) from kininogen involves hydrolysis of Met-|-Xaa or Leu-|-Xaa.</text>
        <dbReference type="EC" id="3.4.21.35"/>
    </reaction>
</comment>
<comment type="alternative products">
    <event type="alternative splicing"/>
    <isoform>
        <id>P20151-1</id>
        <name>1</name>
        <sequence type="displayed"/>
    </isoform>
    <isoform>
        <id>P20151-2</id>
        <name>2</name>
        <name>PGK-10A</name>
        <sequence type="described" ref="VSP_005399"/>
    </isoform>
    <isoform>
        <id>P20151-3</id>
        <name>3</name>
        <sequence type="described" ref="VSP_005400"/>
    </isoform>
    <isoform>
        <id>P20151-4</id>
        <name>4</name>
        <sequence type="described" ref="VSP_044709"/>
    </isoform>
</comment>
<comment type="miscellaneous">
    <molecule>Isoform 3</molecule>
    <text evidence="6">May be produced at very low levels due to a premature stop codon in the mRNA, leading to nonsense-mediated mRNA decay.</text>
</comment>
<comment type="similarity">
    <text evidence="2">Belongs to the peptidase S1 family. Kallikrein subfamily.</text>
</comment>
<comment type="sequence caution" evidence="6">
    <conflict type="miscellaneous discrepancy">
        <sequence resource="EMBL-CDS" id="AAD13817"/>
    </conflict>
</comment>
<name>KLK2_HUMAN</name>
<feature type="signal peptide" evidence="6">
    <location>
        <begin position="1"/>
        <end position="18"/>
    </location>
</feature>
<feature type="propeptide" id="PRO_0000027929" description="Activation peptide" evidence="6">
    <location>
        <begin position="19"/>
        <end position="24"/>
    </location>
</feature>
<feature type="chain" id="PRO_0000027930" description="Kallikrein-2">
    <location>
        <begin position="25"/>
        <end position="261"/>
    </location>
</feature>
<feature type="domain" description="Peptidase S1" evidence="2">
    <location>
        <begin position="25"/>
        <end position="258"/>
    </location>
</feature>
<feature type="active site" description="Charge relay system">
    <location>
        <position position="65"/>
    </location>
</feature>
<feature type="active site" description="Charge relay system">
    <location>
        <position position="120"/>
    </location>
</feature>
<feature type="active site" description="Charge relay system">
    <location>
        <position position="213"/>
    </location>
</feature>
<feature type="glycosylation site" description="N-linked (GlcNAc...) asparagine" evidence="1">
    <location>
        <position position="102"/>
    </location>
</feature>
<feature type="disulfide bond" evidence="2">
    <location>
        <begin position="31"/>
        <end position="173"/>
    </location>
</feature>
<feature type="disulfide bond" evidence="2">
    <location>
        <begin position="50"/>
        <end position="66"/>
    </location>
</feature>
<feature type="disulfide bond" evidence="2">
    <location>
        <begin position="152"/>
        <end position="219"/>
    </location>
</feature>
<feature type="disulfide bond" evidence="2">
    <location>
        <begin position="184"/>
        <end position="198"/>
    </location>
</feature>
<feature type="disulfide bond" evidence="2">
    <location>
        <begin position="209"/>
        <end position="234"/>
    </location>
</feature>
<feature type="splice variant" id="VSP_044709" description="In isoform 4." evidence="4">
    <location>
        <begin position="1"/>
        <end position="102"/>
    </location>
</feature>
<feature type="splice variant" id="VSP_005400" description="In isoform 3." evidence="6">
    <location>
        <begin position="165"/>
        <end position="261"/>
    </location>
</feature>
<feature type="splice variant" id="VSP_005399" description="In isoform 2." evidence="4 5">
    <original>GDSGGPLVCNGVLQGITSWGPEPCALPEKPAVYTKVVHYRKWIKDTIAANP</original>
    <variation>VSHPYSQHLEGKG</variation>
    <location>
        <begin position="211"/>
        <end position="261"/>
    </location>
</feature>
<feature type="sequence variant" id="VAR_014164" description="In dbSNP:rs6072." evidence="3">
    <original>V</original>
    <variation>L</variation>
    <location>
        <position position="18"/>
    </location>
</feature>
<feature type="sequence variant" id="VAR_020178" description="In dbSNP:rs198977.">
    <original>R</original>
    <variation>W</variation>
    <location>
        <position position="250"/>
    </location>
</feature>
<feature type="sequence variant" id="VAR_061775" description="In dbSNP:rs60268688.">
    <original>D</original>
    <variation>A</variation>
    <location>
        <position position="255"/>
    </location>
</feature>
<feature type="sequence conflict" description="In Ref. 6; BAG62255." evidence="6" ref="6">
    <original>T</original>
    <variation>A</variation>
    <location>
        <position position="143"/>
    </location>
</feature>
<feature type="strand" evidence="7">
    <location>
        <begin position="39"/>
        <end position="44"/>
    </location>
</feature>
<feature type="strand" evidence="7">
    <location>
        <begin position="47"/>
        <end position="56"/>
    </location>
</feature>
<feature type="strand" evidence="7">
    <location>
        <begin position="59"/>
        <end position="62"/>
    </location>
</feature>
<feature type="helix" evidence="7">
    <location>
        <begin position="64"/>
        <end position="66"/>
    </location>
</feature>
<feature type="strand" evidence="7">
    <location>
        <begin position="72"/>
        <end position="76"/>
    </location>
</feature>
<feature type="strand" evidence="7">
    <location>
        <begin position="88"/>
        <end position="97"/>
    </location>
</feature>
<feature type="helix" evidence="8">
    <location>
        <begin position="103"/>
        <end position="105"/>
    </location>
</feature>
<feature type="strand" evidence="7">
    <location>
        <begin position="122"/>
        <end position="128"/>
    </location>
</feature>
<feature type="strand" evidence="8">
    <location>
        <begin position="134"/>
        <end position="136"/>
    </location>
</feature>
<feature type="strand" evidence="7">
    <location>
        <begin position="151"/>
        <end position="158"/>
    </location>
</feature>
<feature type="strand" evidence="7">
    <location>
        <begin position="160"/>
        <end position="164"/>
    </location>
</feature>
<feature type="strand" evidence="7">
    <location>
        <begin position="172"/>
        <end position="179"/>
    </location>
</feature>
<feature type="helix" evidence="7">
    <location>
        <begin position="181"/>
        <end position="187"/>
    </location>
</feature>
<feature type="strand" evidence="7">
    <location>
        <begin position="196"/>
        <end position="200"/>
    </location>
</feature>
<feature type="strand" evidence="7">
    <location>
        <begin position="216"/>
        <end position="219"/>
    </location>
</feature>
<feature type="strand" evidence="7">
    <location>
        <begin position="222"/>
        <end position="229"/>
    </location>
</feature>
<feature type="strand" evidence="7">
    <location>
        <begin position="241"/>
        <end position="245"/>
    </location>
</feature>
<feature type="helix" evidence="7">
    <location>
        <begin position="246"/>
        <end position="249"/>
    </location>
</feature>
<feature type="helix" evidence="7">
    <location>
        <begin position="250"/>
        <end position="259"/>
    </location>
</feature>
<feature type="sequence conflict" description="In Ref. 6; BAG62272." evidence="6" ref="6">
    <original>G</original>
    <variation>GE</variation>
    <location sequence="P20151-2">
        <position position="223"/>
    </location>
</feature>
<keyword id="KW-0002">3D-structure</keyword>
<keyword id="KW-0025">Alternative splicing</keyword>
<keyword id="KW-1015">Disulfide bond</keyword>
<keyword id="KW-0325">Glycoprotein</keyword>
<keyword id="KW-0378">Hydrolase</keyword>
<keyword id="KW-0645">Protease</keyword>
<keyword id="KW-1267">Proteomics identification</keyword>
<keyword id="KW-1185">Reference proteome</keyword>
<keyword id="KW-0720">Serine protease</keyword>
<keyword id="KW-0732">Signal</keyword>
<keyword id="KW-0865">Zymogen</keyword>
<accession>P20151</accession>
<accession>B4DU93</accession>
<accession>B4DUB0</accession>
<accession>F5H8L3</accession>
<accession>Q15946</accession>
<accession>Q9UJZ9</accession>
<gene>
    <name type="primary">KLK2</name>
</gene>
<dbReference type="EC" id="3.4.21.35"/>
<dbReference type="EMBL" id="M18156">
    <property type="status" value="NOT_ANNOTATED_CDS"/>
    <property type="molecule type" value="Genomic_DNA"/>
</dbReference>
<dbReference type="EMBL" id="M18157">
    <property type="protein sequence ID" value="AAA74454.1"/>
    <property type="molecule type" value="Genomic_DNA"/>
</dbReference>
<dbReference type="EMBL" id="S39329">
    <property type="protein sequence ID" value="AAD13816.1"/>
    <property type="molecule type" value="mRNA"/>
</dbReference>
<dbReference type="EMBL" id="S39329">
    <property type="protein sequence ID" value="AAD13817.1"/>
    <property type="status" value="ALT_SEQ"/>
    <property type="molecule type" value="mRNA"/>
</dbReference>
<dbReference type="EMBL" id="AF188745">
    <property type="protein sequence ID" value="AAF08275.1"/>
    <property type="molecule type" value="mRNA"/>
</dbReference>
<dbReference type="EMBL" id="AF188746">
    <property type="protein sequence ID" value="AAF08276.1"/>
    <property type="molecule type" value="mRNA"/>
</dbReference>
<dbReference type="EMBL" id="AF188747">
    <property type="protein sequence ID" value="AAF08277.1"/>
    <property type="molecule type" value="mRNA"/>
</dbReference>
<dbReference type="EMBL" id="AF243527">
    <property type="protein sequence ID" value="AAG33356.1"/>
    <property type="molecule type" value="Genomic_DNA"/>
</dbReference>
<dbReference type="EMBL" id="BT006650">
    <property type="protein sequence ID" value="AAP35296.1"/>
    <property type="molecule type" value="mRNA"/>
</dbReference>
<dbReference type="EMBL" id="AK300549">
    <property type="protein sequence ID" value="BAG62255.1"/>
    <property type="molecule type" value="mRNA"/>
</dbReference>
<dbReference type="EMBL" id="AK300566">
    <property type="protein sequence ID" value="BAG62272.1"/>
    <property type="molecule type" value="mRNA"/>
</dbReference>
<dbReference type="EMBL" id="AC037199">
    <property type="status" value="NOT_ANNOTATED_CDS"/>
    <property type="molecule type" value="Genomic_DNA"/>
</dbReference>
<dbReference type="EMBL" id="BC005196">
    <property type="protein sequence ID" value="AAH05196.1"/>
    <property type="molecule type" value="mRNA"/>
</dbReference>
<dbReference type="CCDS" id="CCDS12808.1">
    <molecule id="P20151-1"/>
</dbReference>
<dbReference type="CCDS" id="CCDS42597.1">
    <molecule id="P20151-2"/>
</dbReference>
<dbReference type="CCDS" id="CCDS58675.1">
    <molecule id="P20151-4"/>
</dbReference>
<dbReference type="PIR" id="A29586">
    <property type="entry name" value="A29586"/>
</dbReference>
<dbReference type="RefSeq" id="NP_001002231.1">
    <molecule id="P20151-2"/>
    <property type="nucleotide sequence ID" value="NM_001002231.3"/>
</dbReference>
<dbReference type="RefSeq" id="NP_001243009.1">
    <molecule id="P20151-4"/>
    <property type="nucleotide sequence ID" value="NM_001256080.2"/>
</dbReference>
<dbReference type="RefSeq" id="NP_005542.1">
    <molecule id="P20151-1"/>
    <property type="nucleotide sequence ID" value="NM_005551.5"/>
</dbReference>
<dbReference type="PDB" id="4NFE">
    <property type="method" value="X-ray"/>
    <property type="resolution" value="1.90 A"/>
    <property type="chains" value="A=25-261"/>
</dbReference>
<dbReference type="PDB" id="4NFF">
    <property type="method" value="X-ray"/>
    <property type="resolution" value="1.90 A"/>
    <property type="chains" value="A=25-261"/>
</dbReference>
<dbReference type="PDBsum" id="4NFE"/>
<dbReference type="PDBsum" id="4NFF"/>
<dbReference type="SMR" id="P20151"/>
<dbReference type="BioGRID" id="110017">
    <property type="interactions" value="44"/>
</dbReference>
<dbReference type="CORUM" id="P20151"/>
<dbReference type="FunCoup" id="P20151">
    <property type="interactions" value="80"/>
</dbReference>
<dbReference type="IntAct" id="P20151">
    <property type="interactions" value="24"/>
</dbReference>
<dbReference type="STRING" id="9606.ENSP00000313581"/>
<dbReference type="BindingDB" id="P20151"/>
<dbReference type="ChEMBL" id="CHEMBL2442"/>
<dbReference type="DrugBank" id="DB12120">
    <property type="generic name" value="Avoralstat"/>
</dbReference>
<dbReference type="GuidetoPHARMACOLOGY" id="2372"/>
<dbReference type="Allergome" id="2836">
    <property type="allergen name" value="Hom s PSA"/>
</dbReference>
<dbReference type="MEROPS" id="S01.161"/>
<dbReference type="GlyCosmos" id="P20151">
    <property type="glycosylation" value="1 site, No reported glycans"/>
</dbReference>
<dbReference type="GlyGen" id="P20151">
    <property type="glycosylation" value="1 site"/>
</dbReference>
<dbReference type="iPTMnet" id="P20151"/>
<dbReference type="PhosphoSitePlus" id="P20151"/>
<dbReference type="BioMuta" id="KLK2"/>
<dbReference type="DMDM" id="125174"/>
<dbReference type="jPOST" id="P20151"/>
<dbReference type="MassIVE" id="P20151"/>
<dbReference type="PaxDb" id="9606-ENSP00000313581"/>
<dbReference type="PeptideAtlas" id="P20151"/>
<dbReference type="ProteomicsDB" id="27819"/>
<dbReference type="ProteomicsDB" id="53728">
    <molecule id="P20151-1"/>
</dbReference>
<dbReference type="ProteomicsDB" id="53729">
    <molecule id="P20151-2"/>
</dbReference>
<dbReference type="ProteomicsDB" id="53730">
    <molecule id="P20151-3"/>
</dbReference>
<dbReference type="ABCD" id="P20151">
    <property type="antibodies" value="2 sequenced antibodies"/>
</dbReference>
<dbReference type="Antibodypedia" id="32384">
    <property type="antibodies" value="405 antibodies from 35 providers"/>
</dbReference>
<dbReference type="DNASU" id="3817"/>
<dbReference type="Ensembl" id="ENST00000325321.8">
    <molecule id="P20151-1"/>
    <property type="protein sequence ID" value="ENSP00000313581.2"/>
    <property type="gene ID" value="ENSG00000167751.13"/>
</dbReference>
<dbReference type="Ensembl" id="ENST00000358049.8">
    <molecule id="P20151-2"/>
    <property type="protein sequence ID" value="ENSP00000350748.3"/>
    <property type="gene ID" value="ENSG00000167751.13"/>
</dbReference>
<dbReference type="Ensembl" id="ENST00000391810.6">
    <molecule id="P20151-4"/>
    <property type="protein sequence ID" value="ENSP00000375686.2"/>
    <property type="gene ID" value="ENSG00000167751.13"/>
</dbReference>
<dbReference type="Ensembl" id="ENST00000597439.1">
    <molecule id="P20151-3"/>
    <property type="protein sequence ID" value="ENSP00000471214.1"/>
    <property type="gene ID" value="ENSG00000167751.13"/>
</dbReference>
<dbReference type="GeneID" id="3817"/>
<dbReference type="KEGG" id="hsa:3817"/>
<dbReference type="MANE-Select" id="ENST00000325321.8">
    <property type="protein sequence ID" value="ENSP00000313581.2"/>
    <property type="RefSeq nucleotide sequence ID" value="NM_005551.5"/>
    <property type="RefSeq protein sequence ID" value="NP_005542.1"/>
</dbReference>
<dbReference type="UCSC" id="uc002ptu.4">
    <molecule id="P20151-1"/>
    <property type="organism name" value="human"/>
</dbReference>
<dbReference type="AGR" id="HGNC:6363"/>
<dbReference type="CTD" id="3817"/>
<dbReference type="DisGeNET" id="3817"/>
<dbReference type="GeneCards" id="KLK2"/>
<dbReference type="HGNC" id="HGNC:6363">
    <property type="gene designation" value="KLK2"/>
</dbReference>
<dbReference type="HPA" id="ENSG00000167751">
    <property type="expression patterns" value="Tissue enriched (prostate)"/>
</dbReference>
<dbReference type="MIM" id="147960">
    <property type="type" value="gene"/>
</dbReference>
<dbReference type="neXtProt" id="NX_P20151"/>
<dbReference type="OpenTargets" id="ENSG00000167751"/>
<dbReference type="PharmGKB" id="PA30152"/>
<dbReference type="VEuPathDB" id="HostDB:ENSG00000167751"/>
<dbReference type="eggNOG" id="KOG3627">
    <property type="taxonomic scope" value="Eukaryota"/>
</dbReference>
<dbReference type="GeneTree" id="ENSGT01020000230389"/>
<dbReference type="HOGENOM" id="CLU_006842_1_1_1"/>
<dbReference type="InParanoid" id="P20151"/>
<dbReference type="OMA" id="IGGWECE"/>
<dbReference type="OrthoDB" id="546450at2759"/>
<dbReference type="PAN-GO" id="P20151">
    <property type="GO annotations" value="3 GO annotations based on evolutionary models"/>
</dbReference>
<dbReference type="PhylomeDB" id="P20151"/>
<dbReference type="TreeFam" id="TF331065"/>
<dbReference type="PathwayCommons" id="P20151"/>
<dbReference type="Reactome" id="R-HSA-1592389">
    <property type="pathway name" value="Activation of Matrix Metalloproteinases"/>
</dbReference>
<dbReference type="Reactome" id="R-HSA-381426">
    <property type="pathway name" value="Regulation of Insulin-like Growth Factor (IGF) transport and uptake by Insulin-like Growth Factor Binding Proteins (IGFBPs)"/>
</dbReference>
<dbReference type="Reactome" id="R-HSA-5625886">
    <property type="pathway name" value="Activated PKN1 stimulates transcription of AR (androgen receptor) regulated genes KLK2 and KLK3"/>
</dbReference>
<dbReference type="SignaLink" id="P20151"/>
<dbReference type="SIGNOR" id="P20151"/>
<dbReference type="BioGRID-ORCS" id="3817">
    <property type="hits" value="16 hits in 1145 CRISPR screens"/>
</dbReference>
<dbReference type="ChiTaRS" id="KLK2">
    <property type="organism name" value="human"/>
</dbReference>
<dbReference type="EvolutionaryTrace" id="P20151"/>
<dbReference type="GenomeRNAi" id="3817"/>
<dbReference type="Pharos" id="P20151">
    <property type="development level" value="Tchem"/>
</dbReference>
<dbReference type="PRO" id="PR:P20151"/>
<dbReference type="Proteomes" id="UP000005640">
    <property type="component" value="Chromosome 19"/>
</dbReference>
<dbReference type="RNAct" id="P20151">
    <property type="molecule type" value="protein"/>
</dbReference>
<dbReference type="Bgee" id="ENSG00000167751">
    <property type="expression patterns" value="Expressed in prostate gland and 131 other cell types or tissues"/>
</dbReference>
<dbReference type="ExpressionAtlas" id="P20151">
    <property type="expression patterns" value="baseline and differential"/>
</dbReference>
<dbReference type="GO" id="GO:0070062">
    <property type="term" value="C:extracellular exosome"/>
    <property type="evidence" value="ECO:0007005"/>
    <property type="project" value="UniProtKB"/>
</dbReference>
<dbReference type="GO" id="GO:0005576">
    <property type="term" value="C:extracellular region"/>
    <property type="evidence" value="ECO:0000304"/>
    <property type="project" value="Reactome"/>
</dbReference>
<dbReference type="GO" id="GO:0005615">
    <property type="term" value="C:extracellular space"/>
    <property type="evidence" value="ECO:0000318"/>
    <property type="project" value="GO_Central"/>
</dbReference>
<dbReference type="GO" id="GO:0030141">
    <property type="term" value="C:secretory granule"/>
    <property type="evidence" value="ECO:0000318"/>
    <property type="project" value="GO_Central"/>
</dbReference>
<dbReference type="GO" id="GO:0004252">
    <property type="term" value="F:serine-type endopeptidase activity"/>
    <property type="evidence" value="ECO:0000314"/>
    <property type="project" value="BHF-UCL"/>
</dbReference>
<dbReference type="GO" id="GO:0003073">
    <property type="term" value="P:regulation of systemic arterial blood pressure"/>
    <property type="evidence" value="ECO:0000318"/>
    <property type="project" value="GO_Central"/>
</dbReference>
<dbReference type="GO" id="GO:0031638">
    <property type="term" value="P:zymogen activation"/>
    <property type="evidence" value="ECO:0000318"/>
    <property type="project" value="GO_Central"/>
</dbReference>
<dbReference type="CDD" id="cd00190">
    <property type="entry name" value="Tryp_SPc"/>
    <property type="match status" value="1"/>
</dbReference>
<dbReference type="FunFam" id="2.40.10.10:FF:000032">
    <property type="entry name" value="Kallikrein 1-related peptidase C9"/>
    <property type="match status" value="1"/>
</dbReference>
<dbReference type="FunFam" id="2.40.10.10:FF:000042">
    <property type="entry name" value="Kallikrein 1-related peptidase C9"/>
    <property type="match status" value="1"/>
</dbReference>
<dbReference type="Gene3D" id="2.40.10.10">
    <property type="entry name" value="Trypsin-like serine proteases"/>
    <property type="match status" value="2"/>
</dbReference>
<dbReference type="InterPro" id="IPR009003">
    <property type="entry name" value="Peptidase_S1_PA"/>
</dbReference>
<dbReference type="InterPro" id="IPR043504">
    <property type="entry name" value="Peptidase_S1_PA_chymotrypsin"/>
</dbReference>
<dbReference type="InterPro" id="IPR001314">
    <property type="entry name" value="Peptidase_S1A"/>
</dbReference>
<dbReference type="InterPro" id="IPR001254">
    <property type="entry name" value="Trypsin_dom"/>
</dbReference>
<dbReference type="InterPro" id="IPR018114">
    <property type="entry name" value="TRYPSIN_HIS"/>
</dbReference>
<dbReference type="InterPro" id="IPR033116">
    <property type="entry name" value="TRYPSIN_SER"/>
</dbReference>
<dbReference type="PANTHER" id="PTHR24271:SF94">
    <property type="entry name" value="KALLIKREIN-2"/>
    <property type="match status" value="1"/>
</dbReference>
<dbReference type="PANTHER" id="PTHR24271">
    <property type="entry name" value="KALLIKREIN-RELATED"/>
    <property type="match status" value="1"/>
</dbReference>
<dbReference type="Pfam" id="PF00089">
    <property type="entry name" value="Trypsin"/>
    <property type="match status" value="1"/>
</dbReference>
<dbReference type="PRINTS" id="PR00722">
    <property type="entry name" value="CHYMOTRYPSIN"/>
</dbReference>
<dbReference type="SMART" id="SM00020">
    <property type="entry name" value="Tryp_SPc"/>
    <property type="match status" value="1"/>
</dbReference>
<dbReference type="SUPFAM" id="SSF50494">
    <property type="entry name" value="Trypsin-like serine proteases"/>
    <property type="match status" value="1"/>
</dbReference>
<dbReference type="PROSITE" id="PS50240">
    <property type="entry name" value="TRYPSIN_DOM"/>
    <property type="match status" value="1"/>
</dbReference>
<dbReference type="PROSITE" id="PS00134">
    <property type="entry name" value="TRYPSIN_HIS"/>
    <property type="match status" value="1"/>
</dbReference>
<dbReference type="PROSITE" id="PS00135">
    <property type="entry name" value="TRYPSIN_SER"/>
    <property type="match status" value="1"/>
</dbReference>